<protein>
    <recommendedName>
        <fullName evidence="1">Large ribosomal subunit protein uL23</fullName>
    </recommendedName>
    <alternativeName>
        <fullName evidence="2">50S ribosomal protein L23</fullName>
    </alternativeName>
</protein>
<name>RL23_BRUA1</name>
<evidence type="ECO:0000255" key="1">
    <source>
        <dbReference type="HAMAP-Rule" id="MF_01369"/>
    </source>
</evidence>
<evidence type="ECO:0000305" key="2"/>
<organism>
    <name type="scientific">Brucella abortus (strain S19)</name>
    <dbReference type="NCBI Taxonomy" id="430066"/>
    <lineage>
        <taxon>Bacteria</taxon>
        <taxon>Pseudomonadati</taxon>
        <taxon>Pseudomonadota</taxon>
        <taxon>Alphaproteobacteria</taxon>
        <taxon>Hyphomicrobiales</taxon>
        <taxon>Brucellaceae</taxon>
        <taxon>Brucella/Ochrobactrum group</taxon>
        <taxon>Brucella</taxon>
    </lineage>
</organism>
<accession>B2S677</accession>
<gene>
    <name evidence="1" type="primary">rplW</name>
    <name type="ordered locus">BAbS19_I11690</name>
</gene>
<dbReference type="EMBL" id="CP000887">
    <property type="protein sequence ID" value="ACD72674.1"/>
    <property type="molecule type" value="Genomic_DNA"/>
</dbReference>
<dbReference type="RefSeq" id="WP_002964360.1">
    <property type="nucleotide sequence ID" value="NC_010742.1"/>
</dbReference>
<dbReference type="SMR" id="B2S677"/>
<dbReference type="KEGG" id="bmc:BAbS19_I11690"/>
<dbReference type="HOGENOM" id="CLU_037562_3_1_5"/>
<dbReference type="Proteomes" id="UP000002565">
    <property type="component" value="Chromosome 1"/>
</dbReference>
<dbReference type="GO" id="GO:1990904">
    <property type="term" value="C:ribonucleoprotein complex"/>
    <property type="evidence" value="ECO:0007669"/>
    <property type="project" value="UniProtKB-KW"/>
</dbReference>
<dbReference type="GO" id="GO:0005840">
    <property type="term" value="C:ribosome"/>
    <property type="evidence" value="ECO:0007669"/>
    <property type="project" value="UniProtKB-KW"/>
</dbReference>
<dbReference type="GO" id="GO:0019843">
    <property type="term" value="F:rRNA binding"/>
    <property type="evidence" value="ECO:0007669"/>
    <property type="project" value="UniProtKB-UniRule"/>
</dbReference>
<dbReference type="GO" id="GO:0003735">
    <property type="term" value="F:structural constituent of ribosome"/>
    <property type="evidence" value="ECO:0007669"/>
    <property type="project" value="InterPro"/>
</dbReference>
<dbReference type="GO" id="GO:0006412">
    <property type="term" value="P:translation"/>
    <property type="evidence" value="ECO:0007669"/>
    <property type="project" value="UniProtKB-UniRule"/>
</dbReference>
<dbReference type="FunFam" id="3.30.70.330:FF:000001">
    <property type="entry name" value="50S ribosomal protein L23"/>
    <property type="match status" value="1"/>
</dbReference>
<dbReference type="Gene3D" id="3.30.70.330">
    <property type="match status" value="1"/>
</dbReference>
<dbReference type="HAMAP" id="MF_01369_B">
    <property type="entry name" value="Ribosomal_uL23_B"/>
    <property type="match status" value="1"/>
</dbReference>
<dbReference type="InterPro" id="IPR012677">
    <property type="entry name" value="Nucleotide-bd_a/b_plait_sf"/>
</dbReference>
<dbReference type="InterPro" id="IPR013025">
    <property type="entry name" value="Ribosomal_uL23-like"/>
</dbReference>
<dbReference type="InterPro" id="IPR012678">
    <property type="entry name" value="Ribosomal_uL23/eL15/eS24_sf"/>
</dbReference>
<dbReference type="NCBIfam" id="NF004359">
    <property type="entry name" value="PRK05738.1-3"/>
    <property type="match status" value="1"/>
</dbReference>
<dbReference type="NCBIfam" id="NF004360">
    <property type="entry name" value="PRK05738.1-5"/>
    <property type="match status" value="1"/>
</dbReference>
<dbReference type="NCBIfam" id="NF004363">
    <property type="entry name" value="PRK05738.2-4"/>
    <property type="match status" value="1"/>
</dbReference>
<dbReference type="PANTHER" id="PTHR11620">
    <property type="entry name" value="60S RIBOSOMAL PROTEIN L23A"/>
    <property type="match status" value="1"/>
</dbReference>
<dbReference type="Pfam" id="PF00276">
    <property type="entry name" value="Ribosomal_L23"/>
    <property type="match status" value="1"/>
</dbReference>
<dbReference type="SUPFAM" id="SSF54189">
    <property type="entry name" value="Ribosomal proteins S24e, L23 and L15e"/>
    <property type="match status" value="1"/>
</dbReference>
<feature type="chain" id="PRO_1000144537" description="Large ribosomal subunit protein uL23">
    <location>
        <begin position="1"/>
        <end position="97"/>
    </location>
</feature>
<keyword id="KW-0687">Ribonucleoprotein</keyword>
<keyword id="KW-0689">Ribosomal protein</keyword>
<keyword id="KW-0694">RNA-binding</keyword>
<keyword id="KW-0699">rRNA-binding</keyword>
<comment type="function">
    <text evidence="1">One of the early assembly proteins it binds 23S rRNA. One of the proteins that surrounds the polypeptide exit tunnel on the outside of the ribosome. Forms the main docking site for trigger factor binding to the ribosome.</text>
</comment>
<comment type="subunit">
    <text evidence="1">Part of the 50S ribosomal subunit. Contacts protein L29, and trigger factor when it is bound to the ribosome.</text>
</comment>
<comment type="similarity">
    <text evidence="1">Belongs to the universal ribosomal protein uL23 family.</text>
</comment>
<reference key="1">
    <citation type="journal article" date="2008" name="PLoS ONE">
        <title>Genome sequence of Brucella abortus vaccine strain S19 compared to virulent strains yields candidate virulence genes.</title>
        <authorList>
            <person name="Crasta O.R."/>
            <person name="Folkerts O."/>
            <person name="Fei Z."/>
            <person name="Mane S.P."/>
            <person name="Evans C."/>
            <person name="Martino-Catt S."/>
            <person name="Bricker B."/>
            <person name="Yu G."/>
            <person name="Du L."/>
            <person name="Sobral B.W."/>
        </authorList>
    </citation>
    <scope>NUCLEOTIDE SEQUENCE [LARGE SCALE GENOMIC DNA]</scope>
    <source>
        <strain>S19</strain>
    </source>
</reference>
<proteinExistence type="inferred from homology"/>
<sequence>MTDLRHYDVIVSPVITEKSTIVSEHNQVVFNVARKATKPEIKAAVEALFGVKVTAVNTAVRKGKVKRFRGLVGRQSDVKKAIVTLAEGQSIDVSTGL</sequence>